<organism>
    <name type="scientific">Rhizobium etli (strain CIAT 652)</name>
    <dbReference type="NCBI Taxonomy" id="491916"/>
    <lineage>
        <taxon>Bacteria</taxon>
        <taxon>Pseudomonadati</taxon>
        <taxon>Pseudomonadota</taxon>
        <taxon>Alphaproteobacteria</taxon>
        <taxon>Hyphomicrobiales</taxon>
        <taxon>Rhizobiaceae</taxon>
        <taxon>Rhizobium/Agrobacterium group</taxon>
        <taxon>Rhizobium</taxon>
    </lineage>
</organism>
<sequence length="712" mass="77374">MFDTHTVEIEWAGRPLKLETGKIARQADGAVLATYGETVVLATVVSAKAPKPGQDFFPLTVNYQEKTYAAGKIPGGYFKREGRPSENETLVSRLIDRPIRPLFPEGYKNDTQVVVTVIQHDLENNPDILSMVATSAALTLSGVPFMGPVGGARVGYINGEYVLNPHLDEMDESSLDLVVAGTYDAVLMVESEAKELPEDVMLGAVMFGHKGFQPVLDAIIKLAEVAAKEPRDFQPEDYSALESEMLGLAEAELREAYKITQKADRYAAVDAVKAKVKAHFLPEEGEAKYTAEEVGAIFKHLQAKIVRWNILDTKSRIDGRDLETVRPIVSEVGLLPRTHGSALFTRGETQAIVVATLGTGEDEQYVDSLTGMYKERFLLHYNFPPYSVGETGRMGSPGRREIGHGKLAWRAIRPMLPSAEQFPYTLRVVSEITESNGSSSMATVCGTSLALMDAGVPLAKPVAGIAMGLILEGDRFAVLSDILGDEDHLGDMDFKVAGTADGITSLQMDIKIAGITEEIMKVALSQAQGGRTHILGEMAKAITESRGQLGEFAPRIEVMNIPVDKIREVIGSGGKVIREIVEKTGAKINIEDDGTVKIASSSGKEIEAARKWIHSIVAEPEIGQIYEGTVVKTADFGAFVNFFGARDGLVHISQLASERVAKTQDVVKEGDKVWVKLLGFDERGKVRLSMKVVDQATGQEIANEKKKEEAAE</sequence>
<gene>
    <name evidence="1" type="primary">pnp</name>
    <name type="ordered locus">RHECIAT_CH0000147</name>
</gene>
<reference key="1">
    <citation type="journal article" date="2010" name="Appl. Environ. Microbiol.">
        <title>Conserved symbiotic plasmid DNA sequences in the multireplicon pangenomic structure of Rhizobium etli.</title>
        <authorList>
            <person name="Gonzalez V."/>
            <person name="Acosta J.L."/>
            <person name="Santamaria R.I."/>
            <person name="Bustos P."/>
            <person name="Fernandez J.L."/>
            <person name="Hernandez Gonzalez I.L."/>
            <person name="Diaz R."/>
            <person name="Flores M."/>
            <person name="Palacios R."/>
            <person name="Mora J."/>
            <person name="Davila G."/>
        </authorList>
    </citation>
    <scope>NUCLEOTIDE SEQUENCE [LARGE SCALE GENOMIC DNA]</scope>
    <source>
        <strain>CIAT 652</strain>
    </source>
</reference>
<proteinExistence type="inferred from homology"/>
<keyword id="KW-0963">Cytoplasm</keyword>
<keyword id="KW-0460">Magnesium</keyword>
<keyword id="KW-0479">Metal-binding</keyword>
<keyword id="KW-0548">Nucleotidyltransferase</keyword>
<keyword id="KW-0694">RNA-binding</keyword>
<keyword id="KW-0808">Transferase</keyword>
<dbReference type="EC" id="2.7.7.8" evidence="1"/>
<dbReference type="EMBL" id="CP001074">
    <property type="protein sequence ID" value="ACE89143.1"/>
    <property type="status" value="ALT_INIT"/>
    <property type="molecule type" value="Genomic_DNA"/>
</dbReference>
<dbReference type="SMR" id="B3PXD7"/>
<dbReference type="KEGG" id="rec:RHECIAT_CH0000147"/>
<dbReference type="eggNOG" id="COG1185">
    <property type="taxonomic scope" value="Bacteria"/>
</dbReference>
<dbReference type="HOGENOM" id="CLU_004217_2_2_5"/>
<dbReference type="Proteomes" id="UP000008817">
    <property type="component" value="Chromosome"/>
</dbReference>
<dbReference type="GO" id="GO:0005829">
    <property type="term" value="C:cytosol"/>
    <property type="evidence" value="ECO:0007669"/>
    <property type="project" value="TreeGrafter"/>
</dbReference>
<dbReference type="GO" id="GO:0000175">
    <property type="term" value="F:3'-5'-RNA exonuclease activity"/>
    <property type="evidence" value="ECO:0007669"/>
    <property type="project" value="TreeGrafter"/>
</dbReference>
<dbReference type="GO" id="GO:0000287">
    <property type="term" value="F:magnesium ion binding"/>
    <property type="evidence" value="ECO:0007669"/>
    <property type="project" value="UniProtKB-UniRule"/>
</dbReference>
<dbReference type="GO" id="GO:0004654">
    <property type="term" value="F:polyribonucleotide nucleotidyltransferase activity"/>
    <property type="evidence" value="ECO:0007669"/>
    <property type="project" value="UniProtKB-UniRule"/>
</dbReference>
<dbReference type="GO" id="GO:0003723">
    <property type="term" value="F:RNA binding"/>
    <property type="evidence" value="ECO:0007669"/>
    <property type="project" value="UniProtKB-UniRule"/>
</dbReference>
<dbReference type="GO" id="GO:0006402">
    <property type="term" value="P:mRNA catabolic process"/>
    <property type="evidence" value="ECO:0007669"/>
    <property type="project" value="UniProtKB-UniRule"/>
</dbReference>
<dbReference type="GO" id="GO:0006396">
    <property type="term" value="P:RNA processing"/>
    <property type="evidence" value="ECO:0007669"/>
    <property type="project" value="InterPro"/>
</dbReference>
<dbReference type="CDD" id="cd02393">
    <property type="entry name" value="KH-I_PNPase"/>
    <property type="match status" value="1"/>
</dbReference>
<dbReference type="CDD" id="cd11363">
    <property type="entry name" value="RNase_PH_PNPase_1"/>
    <property type="match status" value="1"/>
</dbReference>
<dbReference type="CDD" id="cd11364">
    <property type="entry name" value="RNase_PH_PNPase_2"/>
    <property type="match status" value="1"/>
</dbReference>
<dbReference type="CDD" id="cd04472">
    <property type="entry name" value="S1_PNPase"/>
    <property type="match status" value="1"/>
</dbReference>
<dbReference type="FunFam" id="2.40.50.140:FF:000107">
    <property type="entry name" value="Polyribonucleotide nucleotidyltransferase"/>
    <property type="match status" value="1"/>
</dbReference>
<dbReference type="FunFam" id="3.30.1370.10:FF:000001">
    <property type="entry name" value="Polyribonucleotide nucleotidyltransferase"/>
    <property type="match status" value="1"/>
</dbReference>
<dbReference type="FunFam" id="3.30.230.70:FF:000001">
    <property type="entry name" value="Polyribonucleotide nucleotidyltransferase"/>
    <property type="match status" value="1"/>
</dbReference>
<dbReference type="FunFam" id="3.30.230.70:FF:000002">
    <property type="entry name" value="Polyribonucleotide nucleotidyltransferase"/>
    <property type="match status" value="1"/>
</dbReference>
<dbReference type="Gene3D" id="3.30.230.70">
    <property type="entry name" value="GHMP Kinase, N-terminal domain"/>
    <property type="match status" value="2"/>
</dbReference>
<dbReference type="Gene3D" id="3.30.1370.10">
    <property type="entry name" value="K Homology domain, type 1"/>
    <property type="match status" value="1"/>
</dbReference>
<dbReference type="Gene3D" id="2.40.50.140">
    <property type="entry name" value="Nucleic acid-binding proteins"/>
    <property type="match status" value="1"/>
</dbReference>
<dbReference type="HAMAP" id="MF_01595">
    <property type="entry name" value="PNPase"/>
    <property type="match status" value="1"/>
</dbReference>
<dbReference type="InterPro" id="IPR001247">
    <property type="entry name" value="ExoRNase_PH_dom1"/>
</dbReference>
<dbReference type="InterPro" id="IPR015847">
    <property type="entry name" value="ExoRNase_PH_dom2"/>
</dbReference>
<dbReference type="InterPro" id="IPR036345">
    <property type="entry name" value="ExoRNase_PH_dom2_sf"/>
</dbReference>
<dbReference type="InterPro" id="IPR004087">
    <property type="entry name" value="KH_dom"/>
</dbReference>
<dbReference type="InterPro" id="IPR004088">
    <property type="entry name" value="KH_dom_type_1"/>
</dbReference>
<dbReference type="InterPro" id="IPR036612">
    <property type="entry name" value="KH_dom_type_1_sf"/>
</dbReference>
<dbReference type="InterPro" id="IPR012340">
    <property type="entry name" value="NA-bd_OB-fold"/>
</dbReference>
<dbReference type="InterPro" id="IPR012162">
    <property type="entry name" value="PNPase"/>
</dbReference>
<dbReference type="InterPro" id="IPR027408">
    <property type="entry name" value="PNPase/RNase_PH_dom_sf"/>
</dbReference>
<dbReference type="InterPro" id="IPR015848">
    <property type="entry name" value="PNPase_PH_RNA-bd_bac/org-type"/>
</dbReference>
<dbReference type="InterPro" id="IPR036456">
    <property type="entry name" value="PNPase_PH_RNA-bd_sf"/>
</dbReference>
<dbReference type="InterPro" id="IPR020568">
    <property type="entry name" value="Ribosomal_Su5_D2-typ_SF"/>
</dbReference>
<dbReference type="InterPro" id="IPR003029">
    <property type="entry name" value="S1_domain"/>
</dbReference>
<dbReference type="NCBIfam" id="TIGR03591">
    <property type="entry name" value="polynuc_phos"/>
    <property type="match status" value="1"/>
</dbReference>
<dbReference type="NCBIfam" id="NF008805">
    <property type="entry name" value="PRK11824.1"/>
    <property type="match status" value="1"/>
</dbReference>
<dbReference type="PANTHER" id="PTHR11252">
    <property type="entry name" value="POLYRIBONUCLEOTIDE NUCLEOTIDYLTRANSFERASE"/>
    <property type="match status" value="1"/>
</dbReference>
<dbReference type="PANTHER" id="PTHR11252:SF0">
    <property type="entry name" value="POLYRIBONUCLEOTIDE NUCLEOTIDYLTRANSFERASE 1, MITOCHONDRIAL"/>
    <property type="match status" value="1"/>
</dbReference>
<dbReference type="Pfam" id="PF00013">
    <property type="entry name" value="KH_1"/>
    <property type="match status" value="1"/>
</dbReference>
<dbReference type="Pfam" id="PF03726">
    <property type="entry name" value="PNPase"/>
    <property type="match status" value="1"/>
</dbReference>
<dbReference type="Pfam" id="PF01138">
    <property type="entry name" value="RNase_PH"/>
    <property type="match status" value="2"/>
</dbReference>
<dbReference type="Pfam" id="PF03725">
    <property type="entry name" value="RNase_PH_C"/>
    <property type="match status" value="2"/>
</dbReference>
<dbReference type="Pfam" id="PF00575">
    <property type="entry name" value="S1"/>
    <property type="match status" value="1"/>
</dbReference>
<dbReference type="PIRSF" id="PIRSF005499">
    <property type="entry name" value="PNPase"/>
    <property type="match status" value="1"/>
</dbReference>
<dbReference type="SMART" id="SM00322">
    <property type="entry name" value="KH"/>
    <property type="match status" value="1"/>
</dbReference>
<dbReference type="SMART" id="SM00316">
    <property type="entry name" value="S1"/>
    <property type="match status" value="1"/>
</dbReference>
<dbReference type="SUPFAM" id="SSF54791">
    <property type="entry name" value="Eukaryotic type KH-domain (KH-domain type I)"/>
    <property type="match status" value="1"/>
</dbReference>
<dbReference type="SUPFAM" id="SSF50249">
    <property type="entry name" value="Nucleic acid-binding proteins"/>
    <property type="match status" value="1"/>
</dbReference>
<dbReference type="SUPFAM" id="SSF46915">
    <property type="entry name" value="Polynucleotide phosphorylase/guanosine pentaphosphate synthase (PNPase/GPSI), domain 3"/>
    <property type="match status" value="1"/>
</dbReference>
<dbReference type="SUPFAM" id="SSF55666">
    <property type="entry name" value="Ribonuclease PH domain 2-like"/>
    <property type="match status" value="2"/>
</dbReference>
<dbReference type="SUPFAM" id="SSF54211">
    <property type="entry name" value="Ribosomal protein S5 domain 2-like"/>
    <property type="match status" value="2"/>
</dbReference>
<dbReference type="PROSITE" id="PS50084">
    <property type="entry name" value="KH_TYPE_1"/>
    <property type="match status" value="1"/>
</dbReference>
<dbReference type="PROSITE" id="PS50126">
    <property type="entry name" value="S1"/>
    <property type="match status" value="1"/>
</dbReference>
<evidence type="ECO:0000255" key="1">
    <source>
        <dbReference type="HAMAP-Rule" id="MF_01595"/>
    </source>
</evidence>
<evidence type="ECO:0000305" key="2"/>
<accession>B3PXD7</accession>
<name>PNP_RHIE6</name>
<comment type="function">
    <text evidence="1">Involved in mRNA degradation. Catalyzes the phosphorolysis of single-stranded polyribonucleotides processively in the 3'- to 5'-direction.</text>
</comment>
<comment type="catalytic activity">
    <reaction evidence="1">
        <text>RNA(n+1) + phosphate = RNA(n) + a ribonucleoside 5'-diphosphate</text>
        <dbReference type="Rhea" id="RHEA:22096"/>
        <dbReference type="Rhea" id="RHEA-COMP:14527"/>
        <dbReference type="Rhea" id="RHEA-COMP:17342"/>
        <dbReference type="ChEBI" id="CHEBI:43474"/>
        <dbReference type="ChEBI" id="CHEBI:57930"/>
        <dbReference type="ChEBI" id="CHEBI:140395"/>
        <dbReference type="EC" id="2.7.7.8"/>
    </reaction>
</comment>
<comment type="cofactor">
    <cofactor evidence="1">
        <name>Mg(2+)</name>
        <dbReference type="ChEBI" id="CHEBI:18420"/>
    </cofactor>
</comment>
<comment type="subcellular location">
    <subcellularLocation>
        <location evidence="1">Cytoplasm</location>
    </subcellularLocation>
</comment>
<comment type="similarity">
    <text evidence="1">Belongs to the polyribonucleotide nucleotidyltransferase family.</text>
</comment>
<comment type="sequence caution" evidence="2">
    <conflict type="erroneous initiation">
        <sequence resource="EMBL-CDS" id="ACE89143"/>
    </conflict>
</comment>
<protein>
    <recommendedName>
        <fullName evidence="1">Polyribonucleotide nucleotidyltransferase</fullName>
        <ecNumber evidence="1">2.7.7.8</ecNumber>
    </recommendedName>
    <alternativeName>
        <fullName evidence="1">Polynucleotide phosphorylase</fullName>
        <shortName evidence="1">PNPase</shortName>
    </alternativeName>
</protein>
<feature type="chain" id="PRO_0000381913" description="Polyribonucleotide nucleotidyltransferase">
    <location>
        <begin position="1"/>
        <end position="712"/>
    </location>
</feature>
<feature type="domain" description="KH" evidence="1">
    <location>
        <begin position="554"/>
        <end position="613"/>
    </location>
</feature>
<feature type="domain" description="S1 motif" evidence="1">
    <location>
        <begin position="623"/>
        <end position="691"/>
    </location>
</feature>
<feature type="binding site" evidence="1">
    <location>
        <position position="487"/>
    </location>
    <ligand>
        <name>Mg(2+)</name>
        <dbReference type="ChEBI" id="CHEBI:18420"/>
    </ligand>
</feature>
<feature type="binding site" evidence="1">
    <location>
        <position position="493"/>
    </location>
    <ligand>
        <name>Mg(2+)</name>
        <dbReference type="ChEBI" id="CHEBI:18420"/>
    </ligand>
</feature>